<sequence length="237" mass="26044">MAGVSACIKYSMFTFNFLFWLCGILILALAIWVRVSNDSQAIFGSEDVGSSSYVAVDILIAVGAIIMILGFLGCCGAIKESRCMLLLFFIGLLLILLLQVATGILGAVFKSKSDRIVNETLYENTKLLSATGESEKQFQEAIIVFQEEFKCCGLVNGAADWGNNFQHYPELCACLDKQRPCQSYNGKQVYKETCISFIKDFLAKNLIIVIGISFGLAVIEILGLVFSMVLYCQIGNK</sequence>
<proteinExistence type="evidence at protein level"/>
<keyword id="KW-1003">Cell membrane</keyword>
<keyword id="KW-0325">Glycoprotein</keyword>
<keyword id="KW-0472">Membrane</keyword>
<keyword id="KW-1267">Proteomics identification</keyword>
<keyword id="KW-1185">Reference proteome</keyword>
<keyword id="KW-0812">Transmembrane</keyword>
<keyword id="KW-1133">Transmembrane helix</keyword>
<feature type="chain" id="PRO_0000219252" description="Tetraspanin-8">
    <location>
        <begin position="1"/>
        <end position="237"/>
    </location>
</feature>
<feature type="topological domain" description="Cytoplasmic" evidence="1">
    <location>
        <begin position="1"/>
        <end position="9"/>
    </location>
</feature>
<feature type="transmembrane region" description="Helical" evidence="1">
    <location>
        <begin position="10"/>
        <end position="33"/>
    </location>
</feature>
<feature type="topological domain" description="Extracellular" evidence="1">
    <location>
        <begin position="34"/>
        <end position="57"/>
    </location>
</feature>
<feature type="transmembrane region" description="Helical" evidence="1">
    <location>
        <begin position="58"/>
        <end position="72"/>
    </location>
</feature>
<feature type="topological domain" description="Cytoplasmic" evidence="1">
    <location>
        <begin position="73"/>
        <end position="83"/>
    </location>
</feature>
<feature type="transmembrane region" description="Helical" evidence="1">
    <location>
        <begin position="84"/>
        <end position="109"/>
    </location>
</feature>
<feature type="topological domain" description="Extracellular" evidence="1">
    <location>
        <begin position="110"/>
        <end position="205"/>
    </location>
</feature>
<feature type="transmembrane region" description="Helical" evidence="1">
    <location>
        <begin position="206"/>
        <end position="230"/>
    </location>
</feature>
<feature type="topological domain" description="Cytoplasmic" evidence="1">
    <location>
        <begin position="231"/>
        <end position="237"/>
    </location>
</feature>
<feature type="glycosylation site" description="N-linked (GlcNAc...) asparagine" evidence="3">
    <location>
        <position position="118"/>
    </location>
</feature>
<feature type="sequence variant" id="VAR_061848" description="In dbSNP:rs17849952." evidence="2">
    <original>V</original>
    <variation>I</variation>
    <location>
        <position position="35"/>
    </location>
</feature>
<feature type="sequence variant" id="VAR_020093" description="In dbSNP:rs3763978." evidence="2">
    <original>G</original>
    <variation>A</variation>
    <location>
        <position position="73"/>
    </location>
</feature>
<feature type="sequence variant" id="VAR_012054" description="In dbSNP:rs1051334.">
    <original>S</original>
    <variation>A</variation>
    <location>
        <position position="213"/>
    </location>
</feature>
<feature type="mutagenesis site" description="No difference in TSPAN8-mediated MEP1B activity." evidence="5">
    <original>E</original>
    <variation>A</variation>
    <location>
        <position position="133"/>
    </location>
</feature>
<feature type="mutagenesis site" description="No difference in TSPAN8-mediated MEP1B activity." evidence="5">
    <original>E</original>
    <variation>A</variation>
    <location>
        <position position="135"/>
    </location>
</feature>
<dbReference type="EMBL" id="M35252">
    <property type="protein sequence ID" value="AAA35709.1"/>
    <property type="molecule type" value="mRNA"/>
</dbReference>
<dbReference type="EMBL" id="AK313112">
    <property type="protein sequence ID" value="BAG35934.1"/>
    <property type="molecule type" value="mRNA"/>
</dbReference>
<dbReference type="EMBL" id="CH471054">
    <property type="protein sequence ID" value="EAW97257.1"/>
    <property type="molecule type" value="Genomic_DNA"/>
</dbReference>
<dbReference type="EMBL" id="BC005246">
    <property type="protein sequence ID" value="AAH05246.1"/>
    <property type="molecule type" value="mRNA"/>
</dbReference>
<dbReference type="CCDS" id="CCDS8999.1"/>
<dbReference type="PIR" id="A36056">
    <property type="entry name" value="A36056"/>
</dbReference>
<dbReference type="RefSeq" id="NP_001356689.1">
    <property type="nucleotide sequence ID" value="NM_001369760.1"/>
</dbReference>
<dbReference type="RefSeq" id="NP_004607.1">
    <property type="nucleotide sequence ID" value="NM_004616.3"/>
</dbReference>
<dbReference type="RefSeq" id="XP_006719646.1">
    <property type="nucleotide sequence ID" value="XM_006719583.3"/>
</dbReference>
<dbReference type="RefSeq" id="XP_016875402.1">
    <property type="nucleotide sequence ID" value="XM_017019913.1"/>
</dbReference>
<dbReference type="RefSeq" id="XP_054229089.1">
    <property type="nucleotide sequence ID" value="XM_054373114.1"/>
</dbReference>
<dbReference type="SMR" id="P19075"/>
<dbReference type="BioGRID" id="112958">
    <property type="interactions" value="81"/>
</dbReference>
<dbReference type="FunCoup" id="P19075">
    <property type="interactions" value="46"/>
</dbReference>
<dbReference type="IntAct" id="P19075">
    <property type="interactions" value="72"/>
</dbReference>
<dbReference type="STRING" id="9606.ENSP00000377003"/>
<dbReference type="GlyCosmos" id="P19075">
    <property type="glycosylation" value="1 site, No reported glycans"/>
</dbReference>
<dbReference type="GlyGen" id="P19075">
    <property type="glycosylation" value="2 sites, 6 N-linked glycans (1 site), 1 O-linked glycan (1 site)"/>
</dbReference>
<dbReference type="iPTMnet" id="P19075"/>
<dbReference type="PhosphoSitePlus" id="P19075"/>
<dbReference type="SwissPalm" id="P19075"/>
<dbReference type="BioMuta" id="TSPAN8"/>
<dbReference type="DMDM" id="116589"/>
<dbReference type="jPOST" id="P19075"/>
<dbReference type="MassIVE" id="P19075"/>
<dbReference type="PaxDb" id="9606-ENSP00000377003"/>
<dbReference type="PeptideAtlas" id="P19075"/>
<dbReference type="ProteomicsDB" id="53629"/>
<dbReference type="Pumba" id="P19075"/>
<dbReference type="Antibodypedia" id="29509">
    <property type="antibodies" value="320 antibodies from 37 providers"/>
</dbReference>
<dbReference type="DNASU" id="7103"/>
<dbReference type="Ensembl" id="ENST00000247829.8">
    <property type="protein sequence ID" value="ENSP00000247829.3"/>
    <property type="gene ID" value="ENSG00000127324.9"/>
</dbReference>
<dbReference type="Ensembl" id="ENST00000393330.6">
    <property type="protein sequence ID" value="ENSP00000377003.2"/>
    <property type="gene ID" value="ENSG00000127324.9"/>
</dbReference>
<dbReference type="Ensembl" id="ENST00000546561.2">
    <property type="protein sequence ID" value="ENSP00000447160.1"/>
    <property type="gene ID" value="ENSG00000127324.9"/>
</dbReference>
<dbReference type="GeneID" id="7103"/>
<dbReference type="KEGG" id="hsa:7103"/>
<dbReference type="MANE-Select" id="ENST00000247829.8">
    <property type="protein sequence ID" value="ENSP00000247829.3"/>
    <property type="RefSeq nucleotide sequence ID" value="NM_004616.3"/>
    <property type="RefSeq protein sequence ID" value="NP_004607.1"/>
</dbReference>
<dbReference type="UCSC" id="uc001swj.2">
    <property type="organism name" value="human"/>
</dbReference>
<dbReference type="AGR" id="HGNC:11855"/>
<dbReference type="CTD" id="7103"/>
<dbReference type="DisGeNET" id="7103"/>
<dbReference type="GeneCards" id="TSPAN8"/>
<dbReference type="HGNC" id="HGNC:11855">
    <property type="gene designation" value="TSPAN8"/>
</dbReference>
<dbReference type="HPA" id="ENSG00000127324">
    <property type="expression patterns" value="Tissue enhanced (intestine, stomach)"/>
</dbReference>
<dbReference type="MIM" id="600769">
    <property type="type" value="gene"/>
</dbReference>
<dbReference type="neXtProt" id="NX_P19075"/>
<dbReference type="OpenTargets" id="ENSG00000127324"/>
<dbReference type="PharmGKB" id="PA36556"/>
<dbReference type="VEuPathDB" id="HostDB:ENSG00000127324"/>
<dbReference type="eggNOG" id="KOG3882">
    <property type="taxonomic scope" value="Eukaryota"/>
</dbReference>
<dbReference type="GeneTree" id="ENSGT00940000158153"/>
<dbReference type="HOGENOM" id="CLU_055524_4_2_1"/>
<dbReference type="InParanoid" id="P19075"/>
<dbReference type="OMA" id="IAIWIRV"/>
<dbReference type="OrthoDB" id="5982705at2759"/>
<dbReference type="PAN-GO" id="P19075">
    <property type="GO annotations" value="1 GO annotation based on evolutionary models"/>
</dbReference>
<dbReference type="PhylomeDB" id="P19075"/>
<dbReference type="TreeFam" id="TF352895"/>
<dbReference type="PathwayCommons" id="P19075"/>
<dbReference type="SignaLink" id="P19075"/>
<dbReference type="BioGRID-ORCS" id="7103">
    <property type="hits" value="7 hits in 1085 CRISPR screens"/>
</dbReference>
<dbReference type="ChiTaRS" id="TSPAN8">
    <property type="organism name" value="human"/>
</dbReference>
<dbReference type="GeneWiki" id="TSPAN8"/>
<dbReference type="GenomeRNAi" id="7103"/>
<dbReference type="Pharos" id="P19075">
    <property type="development level" value="Tbio"/>
</dbReference>
<dbReference type="PRO" id="PR:P19075"/>
<dbReference type="Proteomes" id="UP000005640">
    <property type="component" value="Chromosome 12"/>
</dbReference>
<dbReference type="RNAct" id="P19075">
    <property type="molecule type" value="protein"/>
</dbReference>
<dbReference type="Bgee" id="ENSG00000127324">
    <property type="expression patterns" value="Expressed in colonic mucosa and 178 other cell types or tissues"/>
</dbReference>
<dbReference type="GO" id="GO:0009986">
    <property type="term" value="C:cell surface"/>
    <property type="evidence" value="ECO:0007669"/>
    <property type="project" value="Ensembl"/>
</dbReference>
<dbReference type="GO" id="GO:0070062">
    <property type="term" value="C:extracellular exosome"/>
    <property type="evidence" value="ECO:0007005"/>
    <property type="project" value="UniProtKB"/>
</dbReference>
<dbReference type="GO" id="GO:0005886">
    <property type="term" value="C:plasma membrane"/>
    <property type="evidence" value="ECO:0000318"/>
    <property type="project" value="GO_Central"/>
</dbReference>
<dbReference type="GO" id="GO:0005178">
    <property type="term" value="F:integrin binding"/>
    <property type="evidence" value="ECO:0007669"/>
    <property type="project" value="Ensembl"/>
</dbReference>
<dbReference type="GO" id="GO:0030195">
    <property type="term" value="P:negative regulation of blood coagulation"/>
    <property type="evidence" value="ECO:0007669"/>
    <property type="project" value="Ensembl"/>
</dbReference>
<dbReference type="GO" id="GO:0010468">
    <property type="term" value="P:regulation of gene expression"/>
    <property type="evidence" value="ECO:0007669"/>
    <property type="project" value="Ensembl"/>
</dbReference>
<dbReference type="GO" id="GO:0007283">
    <property type="term" value="P:spermatogenesis"/>
    <property type="evidence" value="ECO:0007669"/>
    <property type="project" value="Ensembl"/>
</dbReference>
<dbReference type="CDD" id="cd03154">
    <property type="entry name" value="TM4SF3_like_LEL"/>
    <property type="match status" value="1"/>
</dbReference>
<dbReference type="FunFam" id="1.10.1450.10:FF:000031">
    <property type="entry name" value="Tetraspanin"/>
    <property type="match status" value="1"/>
</dbReference>
<dbReference type="Gene3D" id="1.10.1450.10">
    <property type="entry name" value="Tetraspanin"/>
    <property type="match status" value="1"/>
</dbReference>
<dbReference type="InterPro" id="IPR018499">
    <property type="entry name" value="Tetraspanin/Peripherin"/>
</dbReference>
<dbReference type="InterPro" id="IPR000301">
    <property type="entry name" value="Tetraspanin_animals"/>
</dbReference>
<dbReference type="InterPro" id="IPR018503">
    <property type="entry name" value="Tetraspanin_CS"/>
</dbReference>
<dbReference type="InterPro" id="IPR008952">
    <property type="entry name" value="Tetraspanin_EC2_sf"/>
</dbReference>
<dbReference type="PANTHER" id="PTHR19282">
    <property type="entry name" value="TETRASPANIN"/>
    <property type="match status" value="1"/>
</dbReference>
<dbReference type="PANTHER" id="PTHR19282:SF380">
    <property type="entry name" value="TETRASPANIN-8"/>
    <property type="match status" value="1"/>
</dbReference>
<dbReference type="Pfam" id="PF00335">
    <property type="entry name" value="Tetraspanin"/>
    <property type="match status" value="1"/>
</dbReference>
<dbReference type="PIRSF" id="PIRSF002419">
    <property type="entry name" value="Tetraspanin"/>
    <property type="match status" value="1"/>
</dbReference>
<dbReference type="PRINTS" id="PR00259">
    <property type="entry name" value="TMFOUR"/>
</dbReference>
<dbReference type="SUPFAM" id="SSF48652">
    <property type="entry name" value="Tetraspanin"/>
    <property type="match status" value="1"/>
</dbReference>
<dbReference type="PROSITE" id="PS00421">
    <property type="entry name" value="TM4_1"/>
    <property type="match status" value="1"/>
</dbReference>
<name>TSN8_HUMAN</name>
<comment type="function">
    <text evidence="4 5 7 8 9 10">Structural component of specialized membrane microdomains known as tetraspanin-enriched microdomains (TERMs), which act as platforms for receptor clustering and signaling (PubMed:27180357, PubMed:36078095). Participates thereby in diverse biological functions such as cell signal transduction, migration and protein trafficking (PubMed:25761241). Promotes ADAM17-mediated TNF-alpha processing through recruitment of ADAM17 to tetraspanin-enriched micro-domains (TEMs) (PubMed:36078095). Forms a complex with RICTOR and integrin alpha3/ITGA3 to mediate mTORC2 activation and AKT1 phosphorylation leading to cell migration (PubMed:25761241). Reduces apoptosis and autophagy induced by high glucose levels through forming a complex with mTOR and RICTOR (PubMed:35904232). Contributes to the maintenance of intestinal epithelial barrier and plays a role in the regulation of intestine inflammation by switching interferon gamma receptor 1/IFNGR1 from clathrin-dependent to lipid raft-dependent endocytosis route to limit STAT1 activation magnitude and duration (PubMed:37204469). Acts as a modulator of the endothelin axis by associating with endothelin converting enzyme ECE1 and regulating its activity of conversion of the endothelin-1 precursor to endothelin (PubMed:37835445).</text>
</comment>
<comment type="subunit">
    <text evidence="4 5 6 7 8 10">Forms homooligomers (PubMed:34524408). Interacts with MEP1B (PubMed:27180357). Interacts with integrin alpha3/ITGA3 (PubMed:25761241). Interacts with RICTOR and MTOR (PubMed:25761241, PubMed:35904232). Interacts with ADAM17 (PubMed:36078095). Interacts with ECE1 (PubMed:37835445).</text>
</comment>
<comment type="interaction">
    <interactant intactId="EBI-4289938">
        <id>P19075</id>
    </interactant>
    <interactant intactId="EBI-968418">
        <id>Q16820</id>
        <label>MEP1B</label>
    </interactant>
    <organismsDiffer>false</organismsDiffer>
    <experiments>4</experiments>
</comment>
<comment type="interaction">
    <interactant intactId="EBI-4289938">
        <id>P19075</id>
    </interactant>
    <interactant intactId="EBI-8652812">
        <id>P54315</id>
        <label>PNLIPRP1</label>
    </interactant>
    <organismsDiffer>false</organismsDiffer>
    <experiments>3</experiments>
</comment>
<comment type="interaction">
    <interactant intactId="EBI-4289938">
        <id>P19075</id>
    </interactant>
    <interactant intactId="EBI-10314552">
        <id>Q9NVC3</id>
        <label>SLC38A7</label>
    </interactant>
    <organismsDiffer>false</organismsDiffer>
    <experiments>3</experiments>
</comment>
<comment type="interaction">
    <interactant intactId="EBI-4289938">
        <id>P19075</id>
    </interactant>
    <interactant intactId="EBI-11956649">
        <id>P32856-2</id>
        <label>STX2</label>
    </interactant>
    <organismsDiffer>false</organismsDiffer>
    <experiments>3</experiments>
</comment>
<comment type="interaction">
    <interactant intactId="EBI-4289938">
        <id>P19075</id>
    </interactant>
    <interactant intactId="EBI-1047996">
        <id>O14925</id>
        <label>TIMM23</label>
    </interactant>
    <organismsDiffer>false</organismsDiffer>
    <experiments>3</experiments>
</comment>
<comment type="subcellular location">
    <subcellularLocation>
        <location evidence="5 6 9 10">Cell membrane</location>
        <topology>Multi-pass membrane protein</topology>
    </subcellularLocation>
</comment>
<comment type="tissue specificity">
    <text>Gastric, colon, rectal, and pancreatic carcinomas.</text>
</comment>
<comment type="similarity">
    <text evidence="11">Belongs to the tetraspanin (TM4SF) family.</text>
</comment>
<comment type="online information" name="Atlas of Genetics and Cytogenetics in Oncology and Haematology">
    <link uri="https://atlasgeneticsoncology.org/gene/42585/TSPAN8"/>
</comment>
<gene>
    <name type="primary">TSPAN8</name>
    <name type="synonym">TM4SF3</name>
</gene>
<protein>
    <recommendedName>
        <fullName>Tetraspanin-8</fullName>
        <shortName>Tspan-8</shortName>
    </recommendedName>
    <alternativeName>
        <fullName>Transmembrane 4 superfamily member 3</fullName>
    </alternativeName>
    <alternativeName>
        <fullName>Tumor-associated antigen CO-029</fullName>
    </alternativeName>
</protein>
<evidence type="ECO:0000255" key="1"/>
<evidence type="ECO:0000269" key="2">
    <source>
    </source>
</evidence>
<evidence type="ECO:0000269" key="3">
    <source>
    </source>
</evidence>
<evidence type="ECO:0000269" key="4">
    <source>
    </source>
</evidence>
<evidence type="ECO:0000269" key="5">
    <source>
    </source>
</evidence>
<evidence type="ECO:0000269" key="6">
    <source>
    </source>
</evidence>
<evidence type="ECO:0000269" key="7">
    <source>
    </source>
</evidence>
<evidence type="ECO:0000269" key="8">
    <source>
    </source>
</evidence>
<evidence type="ECO:0000269" key="9">
    <source>
    </source>
</evidence>
<evidence type="ECO:0000269" key="10">
    <source>
    </source>
</evidence>
<evidence type="ECO:0000305" key="11"/>
<accession>P19075</accession>
<accession>B2R7T7</accession>
<accession>Q9BS78</accession>
<organism>
    <name type="scientific">Homo sapiens</name>
    <name type="common">Human</name>
    <dbReference type="NCBI Taxonomy" id="9606"/>
    <lineage>
        <taxon>Eukaryota</taxon>
        <taxon>Metazoa</taxon>
        <taxon>Chordata</taxon>
        <taxon>Craniata</taxon>
        <taxon>Vertebrata</taxon>
        <taxon>Euteleostomi</taxon>
        <taxon>Mammalia</taxon>
        <taxon>Eutheria</taxon>
        <taxon>Euarchontoglires</taxon>
        <taxon>Primates</taxon>
        <taxon>Haplorrhini</taxon>
        <taxon>Catarrhini</taxon>
        <taxon>Hominidae</taxon>
        <taxon>Homo</taxon>
    </lineage>
</organism>
<reference key="1">
    <citation type="journal article" date="1990" name="Proc. Natl. Acad. Sci. U.S.A.">
        <title>Molecular cloning of cDNA for the human tumor-associated antigen CO-029 and identification of related transmembrane antigens.</title>
        <authorList>
            <person name="Szala S."/>
            <person name="Kasai Y."/>
            <person name="Steplewski Z."/>
            <person name="Rodeck U."/>
            <person name="Koprowski H."/>
            <person name="Linnenbach A.J."/>
        </authorList>
    </citation>
    <scope>NUCLEOTIDE SEQUENCE [MRNA]</scope>
    <source>
        <tissue>Colon carcinoma</tissue>
    </source>
</reference>
<reference key="2">
    <citation type="journal article" date="2004" name="Nat. Genet.">
        <title>Complete sequencing and characterization of 21,243 full-length human cDNAs.</title>
        <authorList>
            <person name="Ota T."/>
            <person name="Suzuki Y."/>
            <person name="Nishikawa T."/>
            <person name="Otsuki T."/>
            <person name="Sugiyama T."/>
            <person name="Irie R."/>
            <person name="Wakamatsu A."/>
            <person name="Hayashi K."/>
            <person name="Sato H."/>
            <person name="Nagai K."/>
            <person name="Kimura K."/>
            <person name="Makita H."/>
            <person name="Sekine M."/>
            <person name="Obayashi M."/>
            <person name="Nishi T."/>
            <person name="Shibahara T."/>
            <person name="Tanaka T."/>
            <person name="Ishii S."/>
            <person name="Yamamoto J."/>
            <person name="Saito K."/>
            <person name="Kawai Y."/>
            <person name="Isono Y."/>
            <person name="Nakamura Y."/>
            <person name="Nagahari K."/>
            <person name="Murakami K."/>
            <person name="Yasuda T."/>
            <person name="Iwayanagi T."/>
            <person name="Wagatsuma M."/>
            <person name="Shiratori A."/>
            <person name="Sudo H."/>
            <person name="Hosoiri T."/>
            <person name="Kaku Y."/>
            <person name="Kodaira H."/>
            <person name="Kondo H."/>
            <person name="Sugawara M."/>
            <person name="Takahashi M."/>
            <person name="Kanda K."/>
            <person name="Yokoi T."/>
            <person name="Furuya T."/>
            <person name="Kikkawa E."/>
            <person name="Omura Y."/>
            <person name="Abe K."/>
            <person name="Kamihara K."/>
            <person name="Katsuta N."/>
            <person name="Sato K."/>
            <person name="Tanikawa M."/>
            <person name="Yamazaki M."/>
            <person name="Ninomiya K."/>
            <person name="Ishibashi T."/>
            <person name="Yamashita H."/>
            <person name="Murakawa K."/>
            <person name="Fujimori K."/>
            <person name="Tanai H."/>
            <person name="Kimata M."/>
            <person name="Watanabe M."/>
            <person name="Hiraoka S."/>
            <person name="Chiba Y."/>
            <person name="Ishida S."/>
            <person name="Ono Y."/>
            <person name="Takiguchi S."/>
            <person name="Watanabe S."/>
            <person name="Yosida M."/>
            <person name="Hotuta T."/>
            <person name="Kusano J."/>
            <person name="Kanehori K."/>
            <person name="Takahashi-Fujii A."/>
            <person name="Hara H."/>
            <person name="Tanase T.-O."/>
            <person name="Nomura Y."/>
            <person name="Togiya S."/>
            <person name="Komai F."/>
            <person name="Hara R."/>
            <person name="Takeuchi K."/>
            <person name="Arita M."/>
            <person name="Imose N."/>
            <person name="Musashino K."/>
            <person name="Yuuki H."/>
            <person name="Oshima A."/>
            <person name="Sasaki N."/>
            <person name="Aotsuka S."/>
            <person name="Yoshikawa Y."/>
            <person name="Matsunawa H."/>
            <person name="Ichihara T."/>
            <person name="Shiohata N."/>
            <person name="Sano S."/>
            <person name="Moriya S."/>
            <person name="Momiyama H."/>
            <person name="Satoh N."/>
            <person name="Takami S."/>
            <person name="Terashima Y."/>
            <person name="Suzuki O."/>
            <person name="Nakagawa S."/>
            <person name="Senoh A."/>
            <person name="Mizoguchi H."/>
            <person name="Goto Y."/>
            <person name="Shimizu F."/>
            <person name="Wakebe H."/>
            <person name="Hishigaki H."/>
            <person name="Watanabe T."/>
            <person name="Sugiyama A."/>
            <person name="Takemoto M."/>
            <person name="Kawakami B."/>
            <person name="Yamazaki M."/>
            <person name="Watanabe K."/>
            <person name="Kumagai A."/>
            <person name="Itakura S."/>
            <person name="Fukuzumi Y."/>
            <person name="Fujimori Y."/>
            <person name="Komiyama M."/>
            <person name="Tashiro H."/>
            <person name="Tanigami A."/>
            <person name="Fujiwara T."/>
            <person name="Ono T."/>
            <person name="Yamada K."/>
            <person name="Fujii Y."/>
            <person name="Ozaki K."/>
            <person name="Hirao M."/>
            <person name="Ohmori Y."/>
            <person name="Kawabata A."/>
            <person name="Hikiji T."/>
            <person name="Kobatake N."/>
            <person name="Inagaki H."/>
            <person name="Ikema Y."/>
            <person name="Okamoto S."/>
            <person name="Okitani R."/>
            <person name="Kawakami T."/>
            <person name="Noguchi S."/>
            <person name="Itoh T."/>
            <person name="Shigeta K."/>
            <person name="Senba T."/>
            <person name="Matsumura K."/>
            <person name="Nakajima Y."/>
            <person name="Mizuno T."/>
            <person name="Morinaga M."/>
            <person name="Sasaki M."/>
            <person name="Togashi T."/>
            <person name="Oyama M."/>
            <person name="Hata H."/>
            <person name="Watanabe M."/>
            <person name="Komatsu T."/>
            <person name="Mizushima-Sugano J."/>
            <person name="Satoh T."/>
            <person name="Shirai Y."/>
            <person name="Takahashi Y."/>
            <person name="Nakagawa K."/>
            <person name="Okumura K."/>
            <person name="Nagase T."/>
            <person name="Nomura N."/>
            <person name="Kikuchi H."/>
            <person name="Masuho Y."/>
            <person name="Yamashita R."/>
            <person name="Nakai K."/>
            <person name="Yada T."/>
            <person name="Nakamura Y."/>
            <person name="Ohara O."/>
            <person name="Isogai T."/>
            <person name="Sugano S."/>
        </authorList>
    </citation>
    <scope>NUCLEOTIDE SEQUENCE [LARGE SCALE MRNA]</scope>
    <source>
        <tissue>Colon</tissue>
    </source>
</reference>
<reference key="3">
    <citation type="submission" date="2005-07" db="EMBL/GenBank/DDBJ databases">
        <authorList>
            <person name="Mural R.J."/>
            <person name="Istrail S."/>
            <person name="Sutton G.G."/>
            <person name="Florea L."/>
            <person name="Halpern A.L."/>
            <person name="Mobarry C.M."/>
            <person name="Lippert R."/>
            <person name="Walenz B."/>
            <person name="Shatkay H."/>
            <person name="Dew I."/>
            <person name="Miller J.R."/>
            <person name="Flanigan M.J."/>
            <person name="Edwards N.J."/>
            <person name="Bolanos R."/>
            <person name="Fasulo D."/>
            <person name="Halldorsson B.V."/>
            <person name="Hannenhalli S."/>
            <person name="Turner R."/>
            <person name="Yooseph S."/>
            <person name="Lu F."/>
            <person name="Nusskern D.R."/>
            <person name="Shue B.C."/>
            <person name="Zheng X.H."/>
            <person name="Zhong F."/>
            <person name="Delcher A.L."/>
            <person name="Huson D.H."/>
            <person name="Kravitz S.A."/>
            <person name="Mouchard L."/>
            <person name="Reinert K."/>
            <person name="Remington K.A."/>
            <person name="Clark A.G."/>
            <person name="Waterman M.S."/>
            <person name="Eichler E.E."/>
            <person name="Adams M.D."/>
            <person name="Hunkapiller M.W."/>
            <person name="Myers E.W."/>
            <person name="Venter J.C."/>
        </authorList>
    </citation>
    <scope>NUCLEOTIDE SEQUENCE [LARGE SCALE GENOMIC DNA]</scope>
</reference>
<reference key="4">
    <citation type="journal article" date="2004" name="Genome Res.">
        <title>The status, quality, and expansion of the NIH full-length cDNA project: the Mammalian Gene Collection (MGC).</title>
        <authorList>
            <consortium name="The MGC Project Team"/>
        </authorList>
    </citation>
    <scope>NUCLEOTIDE SEQUENCE [LARGE SCALE MRNA]</scope>
    <scope>VARIANTS ILE-35 AND ALA-73</scope>
    <source>
        <tissue>Liver</tissue>
    </source>
</reference>
<reference key="5">
    <citation type="journal article" date="2009" name="J. Proteome Res.">
        <title>Glycoproteomics analysis of human liver tissue by combination of multiple enzyme digestion and hydrazide chemistry.</title>
        <authorList>
            <person name="Chen R."/>
            <person name="Jiang X."/>
            <person name="Sun D."/>
            <person name="Han G."/>
            <person name="Wang F."/>
            <person name="Ye M."/>
            <person name="Wang L."/>
            <person name="Zou H."/>
        </authorList>
    </citation>
    <scope>GLYCOSYLATION [LARGE SCALE ANALYSIS] AT ASN-118</scope>
    <source>
        <tissue>Liver</tissue>
    </source>
</reference>
<reference key="6">
    <citation type="journal article" date="2015" name="Int. J. Mol. Sci.">
        <title>Tetraspanin 8-rictor-integrin alpha3 complex is required for glioma cell migration.</title>
        <authorList>
            <person name="Pan S.J."/>
            <person name="Zhan S.K."/>
            <person name="Pan Y.X."/>
            <person name="Liu W."/>
            <person name="Bian L.G."/>
            <person name="Sun B."/>
            <person name="Sun Q.F."/>
        </authorList>
    </citation>
    <scope>FUNCTION</scope>
    <scope>INTERACTION WITH RICTOR AND INTEGRIN ALPHA3</scope>
</reference>
<reference key="7">
    <citation type="journal article" date="2016" name="Biol. Chem.">
        <title>Tetraspanin 8 is an interactor of the metalloprotease meprin beta within tetraspanin-enriched microdomains.</title>
        <authorList>
            <person name="Schmidt F."/>
            <person name="Mueller M."/>
            <person name="Prox J."/>
            <person name="Arnold P."/>
            <person name="Schoenherr C."/>
            <person name="Tredup C."/>
            <person name="Minder P."/>
            <person name="Ebsen H."/>
            <person name="Janssen O."/>
            <person name="Annaert W."/>
            <person name="Pietrzik C."/>
            <person name="Schmidt-Arras D."/>
            <person name="Sterchi E.E."/>
            <person name="Becker-Pauly C."/>
        </authorList>
    </citation>
    <scope>FUNCTION</scope>
    <scope>INTERACTION WITH MEP1B</scope>
    <scope>SUBCELLULAR LOCATION</scope>
    <scope>MUTAGENESIS OF GLU-133 AND GLU-135</scope>
</reference>
<reference key="8">
    <citation type="journal article" date="2021" name="Biochem. J.">
        <title>Quantitative characterization of tetraspanin 8 homointeractions in the plasma membrane.</title>
        <authorList>
            <person name="Wirth D."/>
            <person name="Oezdemir E."/>
            <person name="King C."/>
            <person name="Ahlswede L."/>
            <person name="Schneider D."/>
            <person name="Hristova K."/>
        </authorList>
    </citation>
    <scope>SUBCELLULAR LOCATION</scope>
    <scope>SUBUNIT</scope>
</reference>
<reference key="9">
    <citation type="journal article" date="2022" name="Cell Biol. Int.">
        <title>TSPAN8 alleviates high glucose-induced apoptosis and autophagy via targeting mTORC2.</title>
        <authorList>
            <person name="Zhuang L."/>
            <person name="Jin G."/>
            <person name="Hu X."/>
            <person name="Yang Q."/>
            <person name="Pei X."/>
            <person name="Zhao W."/>
        </authorList>
    </citation>
    <scope>FUNCTION</scope>
    <scope>INTERACTION WITH RICTOR AND MTOR</scope>
</reference>
<reference key="10">
    <citation type="journal article" date="2022" name="Cells">
        <title>Tetraspanin 8 Subfamily Members Regulate Substrate-Specificity of a Disintegrin and Metalloprotease 17.</title>
        <authorList>
            <person name="Mueller M."/>
            <person name="Saunders C."/>
            <person name="Senftleben A."/>
            <person name="Heidbuechel J.P.W."/>
            <person name="Halwachs B."/>
            <person name="Bolik J."/>
            <person name="Hedemann N."/>
            <person name="Roeder C."/>
            <person name="Bauerschlag D."/>
            <person name="Rose-John S."/>
            <person name="Schmidt-Arras D."/>
        </authorList>
    </citation>
    <scope>FUNCTION</scope>
    <scope>INTERACTION WITH ADAM17</scope>
    <scope>SUBCELLULAR LOCATION</scope>
</reference>
<reference key="11">
    <citation type="journal article" date="2023" name="Cancers">
        <title>The Tetraspanin Tspan8 Associates with Endothelin Converting Enzyme ECE1 and Regulates Its Activity.</title>
        <authorList>
            <person name="Zhu Y."/>
            <person name="Saint-Pol J."/>
            <person name="Nguyen V."/>
            <person name="Rubinstein E."/>
            <person name="Boucheix C."/>
            <person name="Greco C."/>
        </authorList>
    </citation>
    <scope>FUNCTION</scope>
    <scope>INTERACTION WITH ECE1</scope>
    <scope>SUBCELLULAR LOCATION</scope>
</reference>
<reference key="12">
    <citation type="journal article" date="2023" name="Cell. Mol. Life Sci.">
        <title>Tetraspanin Tspan8 restrains interferon signaling to stabilize intestinal epithelium by directing endocytosis of interferon receptor.</title>
        <authorList>
            <person name="Min J."/>
            <person name="Yang S."/>
            <person name="Cai Y."/>
            <person name="Vanderwall D.R."/>
            <person name="Wu Z."/>
            <person name="Li S."/>
            <person name="Liu S."/>
            <person name="Liu B."/>
            <person name="Wang J."/>
            <person name="Ding Y."/>
            <person name="Chen J."/>
            <person name="Jiang C."/>
            <person name="Wren J.D."/>
            <person name="Csiszar A."/>
            <person name="Ungvari Z."/>
            <person name="Greco C."/>
            <person name="Kanie T."/>
            <person name="Peng J."/>
            <person name="Zhang X.A."/>
        </authorList>
    </citation>
    <scope>FUNCTION</scope>
    <scope>SUBCELLULAR LOCATION</scope>
</reference>